<evidence type="ECO:0000255" key="1">
    <source>
        <dbReference type="HAMAP-Rule" id="MF_00719"/>
    </source>
</evidence>
<comment type="function">
    <text evidence="1">Joins adenosylcobinamide-GDP and alpha-ribazole to generate adenosylcobalamin (Ado-cobalamin). Also synthesizes adenosylcobalamin 5'-phosphate from adenosylcobinamide-GDP and alpha-ribazole 5'-phosphate.</text>
</comment>
<comment type="catalytic activity">
    <reaction evidence="1">
        <text>alpha-ribazole + adenosylcob(III)inamide-GDP = adenosylcob(III)alamin + GMP + H(+)</text>
        <dbReference type="Rhea" id="RHEA:16049"/>
        <dbReference type="ChEBI" id="CHEBI:10329"/>
        <dbReference type="ChEBI" id="CHEBI:15378"/>
        <dbReference type="ChEBI" id="CHEBI:18408"/>
        <dbReference type="ChEBI" id="CHEBI:58115"/>
        <dbReference type="ChEBI" id="CHEBI:60487"/>
        <dbReference type="EC" id="2.7.8.26"/>
    </reaction>
</comment>
<comment type="catalytic activity">
    <reaction evidence="1">
        <text>alpha-ribazole 5'-phosphate + adenosylcob(III)inamide-GDP = adenosylcob(III)alamin 5'-phosphate + GMP + H(+)</text>
        <dbReference type="Rhea" id="RHEA:23560"/>
        <dbReference type="ChEBI" id="CHEBI:15378"/>
        <dbReference type="ChEBI" id="CHEBI:57918"/>
        <dbReference type="ChEBI" id="CHEBI:58115"/>
        <dbReference type="ChEBI" id="CHEBI:60487"/>
        <dbReference type="ChEBI" id="CHEBI:60493"/>
        <dbReference type="EC" id="2.7.8.26"/>
    </reaction>
</comment>
<comment type="cofactor">
    <cofactor evidence="1">
        <name>Mg(2+)</name>
        <dbReference type="ChEBI" id="CHEBI:18420"/>
    </cofactor>
</comment>
<comment type="pathway">
    <text evidence="1">Cofactor biosynthesis; adenosylcobalamin biosynthesis; adenosylcobalamin from cob(II)yrinate a,c-diamide: step 7/7.</text>
</comment>
<comment type="subcellular location">
    <subcellularLocation>
        <location evidence="1">Cell inner membrane</location>
        <topology evidence="1">Multi-pass membrane protein</topology>
    </subcellularLocation>
</comment>
<comment type="similarity">
    <text evidence="1">Belongs to the CobS family.</text>
</comment>
<accession>Q12Q70</accession>
<feature type="chain" id="PRO_1000045804" description="Adenosylcobinamide-GDP ribazoletransferase">
    <location>
        <begin position="1"/>
        <end position="262"/>
    </location>
</feature>
<feature type="transmembrane region" description="Helical" evidence="1">
    <location>
        <begin position="11"/>
        <end position="31"/>
    </location>
</feature>
<feature type="transmembrane region" description="Helical" evidence="1">
    <location>
        <begin position="43"/>
        <end position="63"/>
    </location>
</feature>
<feature type="transmembrane region" description="Helical" evidence="1">
    <location>
        <begin position="66"/>
        <end position="86"/>
    </location>
</feature>
<feature type="transmembrane region" description="Helical" evidence="1">
    <location>
        <begin position="121"/>
        <end position="141"/>
    </location>
</feature>
<feature type="transmembrane region" description="Helical" evidence="1">
    <location>
        <begin position="146"/>
        <end position="166"/>
    </location>
</feature>
<feature type="transmembrane region" description="Helical" evidence="1">
    <location>
        <begin position="199"/>
        <end position="219"/>
    </location>
</feature>
<keyword id="KW-0997">Cell inner membrane</keyword>
<keyword id="KW-1003">Cell membrane</keyword>
<keyword id="KW-0169">Cobalamin biosynthesis</keyword>
<keyword id="KW-0460">Magnesium</keyword>
<keyword id="KW-0472">Membrane</keyword>
<keyword id="KW-1185">Reference proteome</keyword>
<keyword id="KW-0808">Transferase</keyword>
<keyword id="KW-0812">Transmembrane</keyword>
<keyword id="KW-1133">Transmembrane helix</keyword>
<sequence length="262" mass="29106">MSNEYNWLRQLNLFFVATGFFTRLPTPSWVIADDNELKKSSRYFGLVGLLIGLICALVYWFTQQWLPTSVAVLLAMVAGVLVTGGFHEDGLADTADGFLGGKTFEDKLRIMKDNHLGSYGAIVLALILLLRWQLLVELALFSPWAAITGFIVAHTLSRVLAASLIFSVKYVTDLELEEGKRLSHDQSLNDLFILLASGIFVLFWLNGLAAFVLFISLWALRFCLCKYFRSQIGGYTGDTLDAAQQVSEIMCYLIILAVGLSA</sequence>
<protein>
    <recommendedName>
        <fullName evidence="1">Adenosylcobinamide-GDP ribazoletransferase</fullName>
        <ecNumber evidence="1">2.7.8.26</ecNumber>
    </recommendedName>
    <alternativeName>
        <fullName evidence="1">Cobalamin synthase</fullName>
    </alternativeName>
    <alternativeName>
        <fullName evidence="1">Cobalamin-5'-phosphate synthase</fullName>
    </alternativeName>
</protein>
<gene>
    <name evidence="1" type="primary">cobS</name>
    <name type="ordered locus">Sden_1118</name>
</gene>
<organism>
    <name type="scientific">Shewanella denitrificans (strain OS217 / ATCC BAA-1090 / DSM 15013)</name>
    <dbReference type="NCBI Taxonomy" id="318161"/>
    <lineage>
        <taxon>Bacteria</taxon>
        <taxon>Pseudomonadati</taxon>
        <taxon>Pseudomonadota</taxon>
        <taxon>Gammaproteobacteria</taxon>
        <taxon>Alteromonadales</taxon>
        <taxon>Shewanellaceae</taxon>
        <taxon>Shewanella</taxon>
    </lineage>
</organism>
<name>COBS_SHEDO</name>
<reference key="1">
    <citation type="submission" date="2006-03" db="EMBL/GenBank/DDBJ databases">
        <title>Complete sequence of Shewanella denitrificans OS217.</title>
        <authorList>
            <consortium name="US DOE Joint Genome Institute"/>
            <person name="Copeland A."/>
            <person name="Lucas S."/>
            <person name="Lapidus A."/>
            <person name="Barry K."/>
            <person name="Detter J.C."/>
            <person name="Glavina del Rio T."/>
            <person name="Hammon N."/>
            <person name="Israni S."/>
            <person name="Dalin E."/>
            <person name="Tice H."/>
            <person name="Pitluck S."/>
            <person name="Brettin T."/>
            <person name="Bruce D."/>
            <person name="Han C."/>
            <person name="Tapia R."/>
            <person name="Gilna P."/>
            <person name="Kiss H."/>
            <person name="Schmutz J."/>
            <person name="Larimer F."/>
            <person name="Land M."/>
            <person name="Hauser L."/>
            <person name="Kyrpides N."/>
            <person name="Lykidis A."/>
            <person name="Richardson P."/>
        </authorList>
    </citation>
    <scope>NUCLEOTIDE SEQUENCE [LARGE SCALE GENOMIC DNA]</scope>
    <source>
        <strain>OS217 / ATCC BAA-1090 / DSM 15013</strain>
    </source>
</reference>
<dbReference type="EC" id="2.7.8.26" evidence="1"/>
<dbReference type="EMBL" id="CP000302">
    <property type="protein sequence ID" value="ABE54406.1"/>
    <property type="molecule type" value="Genomic_DNA"/>
</dbReference>
<dbReference type="RefSeq" id="WP_011495568.1">
    <property type="nucleotide sequence ID" value="NC_007954.1"/>
</dbReference>
<dbReference type="STRING" id="318161.Sden_1118"/>
<dbReference type="KEGG" id="sdn:Sden_1118"/>
<dbReference type="eggNOG" id="COG0368">
    <property type="taxonomic scope" value="Bacteria"/>
</dbReference>
<dbReference type="HOGENOM" id="CLU_057426_1_1_6"/>
<dbReference type="OrthoDB" id="9794626at2"/>
<dbReference type="UniPathway" id="UPA00148">
    <property type="reaction ID" value="UER00238"/>
</dbReference>
<dbReference type="Proteomes" id="UP000001982">
    <property type="component" value="Chromosome"/>
</dbReference>
<dbReference type="GO" id="GO:0005886">
    <property type="term" value="C:plasma membrane"/>
    <property type="evidence" value="ECO:0007669"/>
    <property type="project" value="UniProtKB-SubCell"/>
</dbReference>
<dbReference type="GO" id="GO:0051073">
    <property type="term" value="F:adenosylcobinamide-GDP ribazoletransferase activity"/>
    <property type="evidence" value="ECO:0007669"/>
    <property type="project" value="UniProtKB-UniRule"/>
</dbReference>
<dbReference type="GO" id="GO:0008818">
    <property type="term" value="F:cobalamin 5'-phosphate synthase activity"/>
    <property type="evidence" value="ECO:0007669"/>
    <property type="project" value="UniProtKB-UniRule"/>
</dbReference>
<dbReference type="GO" id="GO:0009236">
    <property type="term" value="P:cobalamin biosynthetic process"/>
    <property type="evidence" value="ECO:0007669"/>
    <property type="project" value="UniProtKB-UniRule"/>
</dbReference>
<dbReference type="HAMAP" id="MF_00719">
    <property type="entry name" value="CobS"/>
    <property type="match status" value="1"/>
</dbReference>
<dbReference type="InterPro" id="IPR003805">
    <property type="entry name" value="CobS"/>
</dbReference>
<dbReference type="NCBIfam" id="TIGR00317">
    <property type="entry name" value="cobS"/>
    <property type="match status" value="1"/>
</dbReference>
<dbReference type="NCBIfam" id="NF001277">
    <property type="entry name" value="PRK00235.1-3"/>
    <property type="match status" value="1"/>
</dbReference>
<dbReference type="PANTHER" id="PTHR34148">
    <property type="entry name" value="ADENOSYLCOBINAMIDE-GDP RIBAZOLETRANSFERASE"/>
    <property type="match status" value="1"/>
</dbReference>
<dbReference type="PANTHER" id="PTHR34148:SF1">
    <property type="entry name" value="ADENOSYLCOBINAMIDE-GDP RIBAZOLETRANSFERASE"/>
    <property type="match status" value="1"/>
</dbReference>
<dbReference type="Pfam" id="PF02654">
    <property type="entry name" value="CobS"/>
    <property type="match status" value="1"/>
</dbReference>
<proteinExistence type="inferred from homology"/>